<dbReference type="EMBL" id="AE000516">
    <property type="protein sequence ID" value="AAK46639.1"/>
    <property type="molecule type" value="Genomic_DNA"/>
</dbReference>
<dbReference type="PIR" id="E70733">
    <property type="entry name" value="E70733"/>
</dbReference>
<dbReference type="RefSeq" id="WP_003411851.1">
    <property type="nucleotide sequence ID" value="NZ_KK341227.1"/>
</dbReference>
<dbReference type="KEGG" id="mtc:MT2354"/>
<dbReference type="PATRIC" id="fig|83331.31.peg.2534"/>
<dbReference type="HOGENOM" id="CLU_148622_0_0_11"/>
<dbReference type="Proteomes" id="UP000001020">
    <property type="component" value="Chromosome"/>
</dbReference>
<gene>
    <name type="ordered locus">MT2354</name>
</gene>
<reference key="1">
    <citation type="journal article" date="2002" name="J. Bacteriol.">
        <title>Whole-genome comparison of Mycobacterium tuberculosis clinical and laboratory strains.</title>
        <authorList>
            <person name="Fleischmann R.D."/>
            <person name="Alland D."/>
            <person name="Eisen J.A."/>
            <person name="Carpenter L."/>
            <person name="White O."/>
            <person name="Peterson J.D."/>
            <person name="DeBoy R.T."/>
            <person name="Dodson R.J."/>
            <person name="Gwinn M.L."/>
            <person name="Haft D.H."/>
            <person name="Hickey E.K."/>
            <person name="Kolonay J.F."/>
            <person name="Nelson W.C."/>
            <person name="Umayam L.A."/>
            <person name="Ermolaeva M.D."/>
            <person name="Salzberg S.L."/>
            <person name="Delcher A."/>
            <person name="Utterback T.R."/>
            <person name="Weidman J.F."/>
            <person name="Khouri H.M."/>
            <person name="Gill J."/>
            <person name="Mikula A."/>
            <person name="Bishai W."/>
            <person name="Jacobs W.R. Jr."/>
            <person name="Venter J.C."/>
            <person name="Fraser C.M."/>
        </authorList>
    </citation>
    <scope>NUCLEOTIDE SEQUENCE [LARGE SCALE GENOMIC DNA]</scope>
    <source>
        <strain>CDC 1551 / Oshkosh</strain>
    </source>
</reference>
<organism>
    <name type="scientific">Mycobacterium tuberculosis (strain CDC 1551 / Oshkosh)</name>
    <dbReference type="NCBI Taxonomy" id="83331"/>
    <lineage>
        <taxon>Bacteria</taxon>
        <taxon>Bacillati</taxon>
        <taxon>Actinomycetota</taxon>
        <taxon>Actinomycetes</taxon>
        <taxon>Mycobacteriales</taxon>
        <taxon>Mycobacteriaceae</taxon>
        <taxon>Mycobacterium</taxon>
        <taxon>Mycobacterium tuberculosis complex</taxon>
    </lineage>
</organism>
<protein>
    <recommendedName>
        <fullName>Uncharacterized protein MT2354</fullName>
    </recommendedName>
</protein>
<name>Y2297_MYCTO</name>
<keyword id="KW-1185">Reference proteome</keyword>
<keyword id="KW-0732">Signal</keyword>
<accession>P9WLD8</accession>
<accession>L0T974</accession>
<accession>P64979</accession>
<accession>Q50669</accession>
<feature type="signal peptide" evidence="1">
    <location>
        <begin position="1"/>
        <end position="21"/>
    </location>
</feature>
<feature type="chain" id="PRO_0000427496" description="Uncharacterized protein MT2354">
    <location>
        <begin position="22"/>
        <end position="150"/>
    </location>
</feature>
<sequence length="150" mass="16468">MAMEMAMMGLLGTVVGASAMGIGGIAKSIAEAYVPGVAAAKDRRQQMNVDLQARRYEAVRVWRSGLCSASNAYRQWEAGSRDTHAPNVVGDEWFEGLRPHLPTTGEAAKFRTAYEVRCDNPTLMVLSLEIGRIEKEWMVEASGRTPKHRG</sequence>
<evidence type="ECO:0000255" key="1"/>
<proteinExistence type="inferred from homology"/>